<dbReference type="EMBL" id="Z72390">
    <property type="protein sequence ID" value="CAA96530.1"/>
    <property type="molecule type" value="Genomic_DNA"/>
</dbReference>
<dbReference type="SMR" id="Q92262"/>
<dbReference type="IntAct" id="Q92262">
    <property type="interactions" value="1"/>
</dbReference>
<dbReference type="MINT" id="Q92262"/>
<dbReference type="GO" id="GO:0005778">
    <property type="term" value="C:peroxisomal membrane"/>
    <property type="evidence" value="ECO:0007669"/>
    <property type="project" value="UniProtKB-SubCell"/>
</dbReference>
<dbReference type="GO" id="GO:0030674">
    <property type="term" value="F:protein-macromolecule adaptor activity"/>
    <property type="evidence" value="ECO:0007669"/>
    <property type="project" value="TreeGrafter"/>
</dbReference>
<dbReference type="GO" id="GO:0045046">
    <property type="term" value="P:protein import into peroxisome membrane"/>
    <property type="evidence" value="ECO:0007669"/>
    <property type="project" value="TreeGrafter"/>
</dbReference>
<dbReference type="InterPro" id="IPR006966">
    <property type="entry name" value="Peroxin-3"/>
</dbReference>
<dbReference type="PANTHER" id="PTHR28080">
    <property type="entry name" value="PEROXISOMAL BIOGENESIS FACTOR 3"/>
    <property type="match status" value="1"/>
</dbReference>
<dbReference type="PANTHER" id="PTHR28080:SF1">
    <property type="entry name" value="PEROXISOMAL BIOGENESIS FACTOR 3"/>
    <property type="match status" value="1"/>
</dbReference>
<dbReference type="Pfam" id="PF04882">
    <property type="entry name" value="Peroxin-3"/>
    <property type="match status" value="1"/>
</dbReference>
<evidence type="ECO:0000255" key="1"/>
<evidence type="ECO:0000256" key="2">
    <source>
        <dbReference type="SAM" id="MobiDB-lite"/>
    </source>
</evidence>
<evidence type="ECO:0000269" key="3">
    <source>
    </source>
</evidence>
<evidence type="ECO:0000269" key="4">
    <source>
    </source>
</evidence>
<evidence type="ECO:0000269" key="5">
    <source>
    </source>
</evidence>
<evidence type="ECO:0000269" key="6">
    <source>
    </source>
</evidence>
<evidence type="ECO:0000269" key="7">
    <source>
    </source>
</evidence>
<evidence type="ECO:0000269" key="8">
    <source>
    </source>
</evidence>
<evidence type="ECO:0000269" key="9">
    <source>
    </source>
</evidence>
<evidence type="ECO:0000303" key="10">
    <source>
    </source>
</evidence>
<evidence type="ECO:0000303" key="11">
    <source>
    </source>
</evidence>
<evidence type="ECO:0000305" key="12"/>
<sequence>MLEYTAGLIRRNKKKFLISSGIIGVGYYVTKTINNKIQEFQNRIREENFAKEQIKRRFHQTQSDCYMTFLSLLPVLCEPIMDDLPVETITKQLQIRRLEKQIGNKDVKNSGSTVLSDDFSTSQEGAISEDTNKPPELKSKNQLWQELKIKAITRFLTLIYCESLLIVFLHLQLNILSRKSYLETAIRLASETQGIDLVDQESNGDFSGNTQDENLSEQAFLSFSWWLLNKGWLEIKNKIEPCVEQHFGGINPRQQLKINEFAELLNKCQNCIDLKVLNLTEEDIHLGVGVIEDQSQPVGRKSTNFITNALLPPKEFEFFLLQQTNDLDFLSRFNNNIVNTESLNMLLDELNNYLNNADINLIVNKLATLGITKVLDEIVLNLLQKNRPNPISDMNIRDIDLNDFPPYKLAALLANITKQSISLTNNSVENPILADLNNLPELNDLSASVYSNFDP</sequence>
<proteinExistence type="evidence at protein level"/>
<feature type="chain" id="PRO_0000208745" description="Peroxisomal membrane protein PEX3">
    <location>
        <begin position="1"/>
        <end position="455"/>
    </location>
</feature>
<feature type="transmembrane region" description="Helical" evidence="1">
    <location>
        <begin position="155"/>
        <end position="171"/>
    </location>
</feature>
<feature type="region of interest" description="Disordered" evidence="2">
    <location>
        <begin position="113"/>
        <end position="135"/>
    </location>
</feature>
<feature type="compositionally biased region" description="Polar residues" evidence="2">
    <location>
        <begin position="113"/>
        <end position="125"/>
    </location>
</feature>
<keyword id="KW-0472">Membrane</keyword>
<keyword id="KW-0576">Peroxisome</keyword>
<keyword id="KW-0962">Peroxisome biogenesis</keyword>
<keyword id="KW-0812">Transmembrane</keyword>
<keyword id="KW-1133">Transmembrane helix</keyword>
<accession>Q92262</accession>
<reference key="1">
    <citation type="journal article" date="1996" name="J. Biol. Chem.">
        <title>Isolation and characterization of Pas2p, a peroxisomal membrane protein essential for peroxisome biogenesis in the methylotrophic yeast Pichia pastoris.</title>
        <authorList>
            <person name="Wiemer E.A."/>
            <person name="Lueers G.H."/>
            <person name="Faber K.N."/>
            <person name="Wenzel T."/>
            <person name="Veenhuis M."/>
            <person name="Subramani S."/>
        </authorList>
    </citation>
    <scope>NUCLEOTIDE SEQUENCE [GENOMIC DNA]</scope>
    <scope>FUNCTION</scope>
    <scope>DISRUPTION PHENOTYPE</scope>
    <scope>SUBCELLULAR LOCATION</scope>
</reference>
<reference key="2">
    <citation type="journal article" date="1999" name="Mol. Biol. Cell">
        <title>Pex19p interacts with Pex3p and Pex10p and is essential for peroxisome biogenesis in Pichia pastoris.</title>
        <authorList>
            <person name="Snyder W.B."/>
            <person name="Faber K.N."/>
            <person name="Wenzel T.J."/>
            <person name="Koller A."/>
            <person name="Lueers G.H."/>
            <person name="Rangell L."/>
            <person name="Keller G.A."/>
            <person name="Subramani S."/>
        </authorList>
    </citation>
    <scope>FUNCTION</scope>
    <scope>INDUCTION</scope>
    <scope>SUBCELLULAR LOCATION</scope>
    <scope>INTERACTION WITH PEX19</scope>
</reference>
<reference key="3">
    <citation type="journal article" date="2002" name="Traffic">
        <title>Peroxisome remnants in pex3delta cells and the requirement of Pex3p for interactions between the peroxisomal docking and translocation subcomplexes.</title>
        <authorList>
            <person name="Hazra P.P."/>
            <person name="Suriapranata I."/>
            <person name="Snyder W.B."/>
            <person name="Subramani S."/>
        </authorList>
    </citation>
    <scope>FUNCTION</scope>
    <scope>SUBUNIT</scope>
    <scope>DISRUPTION PHENOTYPE</scope>
</reference>
<reference key="4">
    <citation type="journal article" date="2011" name="Proc. Natl. Acad. Sci. U.S.A.">
        <title>Cell-free sorting of peroxisomal membrane proteins from the endoplasmic reticulum.</title>
        <authorList>
            <person name="Agrawal G."/>
            <person name="Joshi S."/>
            <person name="Subramani S."/>
        </authorList>
    </citation>
    <scope>SUBCELLULAR LOCATION</scope>
</reference>
<reference key="5">
    <citation type="journal article" date="2015" name="J. Biol. Chem.">
        <title>Peroxisomal Pex3 activates selective autophagy of peroxisomes via interaction with the pexophagy receptor Atg30.</title>
        <authorList>
            <person name="Burnett S.F."/>
            <person name="Farre J.C."/>
            <person name="Nazarko T.Y."/>
            <person name="Subramani S."/>
        </authorList>
    </citation>
    <scope>FUNCTION</scope>
    <scope>INTERACTION WITH ATG30</scope>
</reference>
<reference key="6">
    <citation type="journal article" date="2017" name="J. Biol. Chem.">
        <title>Functional regions of the peroxin Pex19 necessary for peroxisome biogenesis.</title>
        <authorList>
            <person name="Agrawal G."/>
            <person name="Shang H.H."/>
            <person name="Xia Z.J."/>
            <person name="Subramani S."/>
        </authorList>
    </citation>
    <scope>INTERACTION WITH PEX19</scope>
</reference>
<reference key="7">
    <citation type="journal article" date="2018" name="Autophagy">
        <title>Pex3 and Atg37 compete to regulate the interaction between the pexophagy receptor, Atg30, and the Hrr25 kinase.</title>
        <authorList>
            <person name="Zientara-Rytter K."/>
            <person name="Ozeki K."/>
            <person name="Nazarko T.Y."/>
            <person name="Subramani S."/>
        </authorList>
    </citation>
    <scope>FUNCTION</scope>
    <scope>INTERACTION WITH ATG30</scope>
</reference>
<name>PEX3_PICPA</name>
<comment type="function">
    <text evidence="3 4 6 8 9">Peroxisomal membrane protein required for peroxisome biosynthesis (PubMed:10359594, PubMed:8702562). Shared component of both the peroxisomal docking complex and the peroxisomal translocation complex (PubMed:12121419). The two types of peroxisomal matrix targeting signals, PTS1 and PTS2, are first recognized in the cytosol by their receptors PEX5 and PEX7, respectively, which then carry the cargo to the peroxisomal membrane. The peroxisomal targeting signal (PTS) receptor-cargo complexes interact with peroxisomal membrane protein (PMP) components of the docking complex. They have then additional downstream interactions with the translocation complex, leading to the transport of fully folded and oligomerized cargo into the peroxisome matrix (PubMed:12121419). PEX3 acts as an anchoring site for PEX19 on the peroxisomal membrane and thus plays a crucial role in the assembly of the peroxisomal translocation complex (PubMed:10359594). Is also essential for the interaction between the two complexes (PubMed:10359594). Finally. PEX3 activates selective autophagy of peroxisomes (pexophagy) via interaction with the pexophagy receptor ATG30 (PubMed:25694426, PubMed:29260977).</text>
</comment>
<comment type="subunit">
    <text evidence="3 4 6 7 8">Component of the peroxisomal docking complex, composed of at least PEX3, PEX13, PEX14 and PEX17 (PubMed:12121419). Component of the peroxisomal translocation complex, composed of at least PEX3, PEX2, PEX10 and PEX12 (PubMed:12121419). Interacts with PEX19 (PubMed:10359594, PubMed:28526747). Interacts with the pexophagy receptor ATG30 (PubMed:25694426, PubMed:29260977).</text>
</comment>
<comment type="interaction">
    <interactant intactId="EBI-8849514">
        <id>Q92262</id>
    </interactant>
    <interactant intactId="EBI-8849497">
        <id>I6LAD1</id>
        <label>ATG30</label>
    </interactant>
    <organismsDiffer>false</organismsDiffer>
    <experiments>3</experiments>
</comment>
<comment type="subcellular location">
    <subcellularLocation>
        <location evidence="3 5 9">Peroxisome membrane</location>
        <topology evidence="1">Single-pass membrane protein</topology>
    </subcellularLocation>
    <text evidence="5">Traffics to peroxisomes via the endolasmic reticulum (ER), where it accumulates in the absence of PEX19.</text>
</comment>
<comment type="induction">
    <text evidence="3">Expression is induced in the presence of oleic acid or methanol.</text>
</comment>
<comment type="disruption phenotype">
    <text evidence="4 9">Leads to a peroxisomal-deficient phenotype and mislocalization in the cytosol of peroxisomal matrix proteins (PubMed:8702562). Affects the assembly of the peroxisomal translocation complex and impairs the interaction between the peroxisomal docking complex and the peroxisomal translocation complex (PubMed:12121419).</text>
</comment>
<comment type="similarity">
    <text evidence="12">Belongs to the peroxin-3 family.</text>
</comment>
<organism>
    <name type="scientific">Komagataella pastoris</name>
    <name type="common">Yeast</name>
    <name type="synonym">Pichia pastoris</name>
    <dbReference type="NCBI Taxonomy" id="4922"/>
    <lineage>
        <taxon>Eukaryota</taxon>
        <taxon>Fungi</taxon>
        <taxon>Dikarya</taxon>
        <taxon>Ascomycota</taxon>
        <taxon>Saccharomycotina</taxon>
        <taxon>Pichiomycetes</taxon>
        <taxon>Pichiales</taxon>
        <taxon>Pichiaceae</taxon>
        <taxon>Komagataella</taxon>
    </lineage>
</organism>
<protein>
    <recommendedName>
        <fullName evidence="10">Peroxisomal membrane protein PEX3</fullName>
        <shortName evidence="10">PMP PEX3</shortName>
    </recommendedName>
    <alternativeName>
        <fullName evidence="10">Peroxin-3</fullName>
    </alternativeName>
    <alternativeName>
        <fullName evidence="11">Peroxisomal membrane protein PAS2</fullName>
    </alternativeName>
</protein>
<gene>
    <name evidence="10" type="primary">PEX3</name>
    <name evidence="11" type="synonym">PAS2</name>
</gene>